<gene>
    <name evidence="1" type="primary">L2</name>
</gene>
<comment type="function">
    <text evidence="1">Minor protein of the capsid that localizes along the inner surface of the virion, within the central cavities beneath the L1 pentamers. Plays a role in capsid stabilization through interaction with the major capsid protein L1. Once the virion enters the host cell, L2 escorts the genomic DNA into the nucleus by promoting escape from the endosomal compartments and traffic through the host Golgi network. Mechanistically, the C-terminus of L2 possesses a cell-penetrating peptide that protudes from the host endosome, interacts with host cytoplasmic retromer cargo and thereby mediates the capsid delivery to the host trans-Golgi network. Plays a role through its interaction with host dynein in the intracellular microtubule-dependent transport of viral capsid toward the nucleus. Mediates the viral genome import into the nucleus through binding to host importins. Once within the nucleus, L2 localizes viral genomes to host PML bodies in order to activate early gene expression for establishment of infection. Later on, promotes late gene expression by interacting with the viral E2 protein and by inhibiting its transcriptional activation functions. During virion assembly, encapsidates the genome by direct interaction with the viral DNA.</text>
</comment>
<comment type="subunit">
    <text evidence="1">Interacts with major capsid protein L1. Interacts with E2; this interaction inhibits E2 transcriptional activity but not the DNA replication function E2. Interacts with host GADD45GIP1. Interacts with host HSPA8; this interaction is required for L2 nuclear translocation. Interacts with host importins KPNB2 and KPNB3. Forms a complex with importin alpha2-beta1 heterodimers via interaction with the importin alpha2 adapter. Interacts with host DYNLT1; this interaction is essential for virus intracellular transport during entry. Interacts (via C-terminus) with host retromer subunits VPS35 and VPS29.</text>
</comment>
<comment type="subcellular location">
    <subcellularLocation>
        <location evidence="1">Virion</location>
    </subcellularLocation>
    <subcellularLocation>
        <location evidence="1">Host nucleus</location>
    </subcellularLocation>
    <subcellularLocation>
        <location evidence="1">Host early endosome</location>
    </subcellularLocation>
    <subcellularLocation>
        <location evidence="1">Host Golgi apparatus</location>
    </subcellularLocation>
</comment>
<comment type="PTM">
    <text evidence="1">Highly phosphorylated.</text>
</comment>
<comment type="similarity">
    <text evidence="1">Belongs to the papillomaviridae L2 protein family.</text>
</comment>
<accession>Q80925</accession>
<name>VL2_HPV48</name>
<protein>
    <recommendedName>
        <fullName evidence="1">Minor capsid protein L2</fullName>
    </recommendedName>
</protein>
<dbReference type="EMBL" id="U31789">
    <property type="protein sequence ID" value="AAA79469.1"/>
    <property type="molecule type" value="Genomic_DNA"/>
</dbReference>
<dbReference type="RefSeq" id="NP_043421.1">
    <property type="nucleotide sequence ID" value="NC_001690.1"/>
</dbReference>
<dbReference type="GeneID" id="1403626"/>
<dbReference type="KEGG" id="vg:1403626"/>
<dbReference type="OrthoDB" id="8047at10239"/>
<dbReference type="Proteomes" id="UP000112710">
    <property type="component" value="Genome"/>
</dbReference>
<dbReference type="GO" id="GO:0043657">
    <property type="term" value="C:host cell"/>
    <property type="evidence" value="ECO:0007669"/>
    <property type="project" value="GOC"/>
</dbReference>
<dbReference type="GO" id="GO:0044174">
    <property type="term" value="C:host cell endosome"/>
    <property type="evidence" value="ECO:0007669"/>
    <property type="project" value="UniProtKB-KW"/>
</dbReference>
<dbReference type="GO" id="GO:0044177">
    <property type="term" value="C:host cell Golgi apparatus"/>
    <property type="evidence" value="ECO:0007669"/>
    <property type="project" value="UniProtKB-SubCell"/>
</dbReference>
<dbReference type="GO" id="GO:0042025">
    <property type="term" value="C:host cell nucleus"/>
    <property type="evidence" value="ECO:0007669"/>
    <property type="project" value="UniProtKB-SubCell"/>
</dbReference>
<dbReference type="GO" id="GO:0019028">
    <property type="term" value="C:viral capsid"/>
    <property type="evidence" value="ECO:0007669"/>
    <property type="project" value="UniProtKB-UniRule"/>
</dbReference>
<dbReference type="GO" id="GO:0003677">
    <property type="term" value="F:DNA binding"/>
    <property type="evidence" value="ECO:0007669"/>
    <property type="project" value="UniProtKB-UniRule"/>
</dbReference>
<dbReference type="GO" id="GO:0005198">
    <property type="term" value="F:structural molecule activity"/>
    <property type="evidence" value="ECO:0007669"/>
    <property type="project" value="UniProtKB-UniRule"/>
</dbReference>
<dbReference type="GO" id="GO:0075521">
    <property type="term" value="P:microtubule-dependent intracellular transport of viral material towards nucleus"/>
    <property type="evidence" value="ECO:0007669"/>
    <property type="project" value="UniProtKB-UniRule"/>
</dbReference>
<dbReference type="GO" id="GO:0046718">
    <property type="term" value="P:symbiont entry into host cell"/>
    <property type="evidence" value="ECO:0007669"/>
    <property type="project" value="UniProtKB-KW"/>
</dbReference>
<dbReference type="GO" id="GO:0075732">
    <property type="term" value="P:viral penetration into host nucleus"/>
    <property type="evidence" value="ECO:0007669"/>
    <property type="project" value="UniProtKB-KW"/>
</dbReference>
<dbReference type="HAMAP" id="MF_04003">
    <property type="entry name" value="PPV_L2"/>
    <property type="match status" value="1"/>
</dbReference>
<dbReference type="InterPro" id="IPR000784">
    <property type="entry name" value="Late_L2"/>
</dbReference>
<dbReference type="Pfam" id="PF00513">
    <property type="entry name" value="Late_protein_L2"/>
    <property type="match status" value="1"/>
</dbReference>
<keyword id="KW-0167">Capsid protein</keyword>
<keyword id="KW-1176">Cytoplasmic inwards viral transport</keyword>
<keyword id="KW-1015">Disulfide bond</keyword>
<keyword id="KW-0238">DNA-binding</keyword>
<keyword id="KW-1039">Host endosome</keyword>
<keyword id="KW-1040">Host Golgi apparatus</keyword>
<keyword id="KW-1048">Host nucleus</keyword>
<keyword id="KW-0945">Host-virus interaction</keyword>
<keyword id="KW-0426">Late protein</keyword>
<keyword id="KW-1177">Microtubular inwards viral transport</keyword>
<keyword id="KW-0597">Phosphoprotein</keyword>
<keyword id="KW-1185">Reference proteome</keyword>
<keyword id="KW-1163">Viral penetration into host nucleus</keyword>
<keyword id="KW-0946">Virion</keyword>
<keyword id="KW-1160">Virus entry into host cell</keyword>
<organism>
    <name type="scientific">Human papillomavirus type 48</name>
    <dbReference type="NCBI Taxonomy" id="40538"/>
    <lineage>
        <taxon>Viruses</taxon>
        <taxon>Monodnaviria</taxon>
        <taxon>Shotokuvirae</taxon>
        <taxon>Cossaviricota</taxon>
        <taxon>Papovaviricetes</taxon>
        <taxon>Zurhausenvirales</taxon>
        <taxon>Papillomaviridae</taxon>
        <taxon>Firstpapillomavirinae</taxon>
        <taxon>Gammapapillomavirus</taxon>
        <taxon>Gammapapillomavirus 2</taxon>
    </lineage>
</organism>
<organismHost>
    <name type="scientific">Homo sapiens</name>
    <name type="common">Human</name>
    <dbReference type="NCBI Taxonomy" id="9606"/>
</organismHost>
<sequence>MSLRRRKRASPTDLYKTCLQGGDCIPDVKNKFENSTIADWLLKIFGSLVYFGNLGIGSGKGSGGSFGYRPLGSAGSGRPATDLPVTRPNVVIEPIGPQSIVPIDPGASSIVPLVEGGPDISFIAPDAGPGIGGEDIELFTFRDPATDVGGVSGGPTTISTEESETAIIDALPSATTPKQLFYDSYTQTILQTQVNPFLNNAISDTNVFVDPLFAGETIGDNIFEEIPLQNLNFSFPRESTPVKPGRGLRTPAQRSYSRFMEQYPIQAPEFLSQPSRLVQFEFENPAFDPDISIQFQRDVNSLEAAPNPAFADIAYLSRPHMSATSEGLVRVSRIGSRAVLQTRSGLTIGPKVHYYMDLSAISTEAIELQTFADSGHVHTIVDDFLSVTALDDPANIADINYTEDDLLDPLLENFNNSHITVQGVDEEGETVALPIPSITNSSKTFVTDIAENGLFANDTDSLLTPASTIVPAINWFPLFDSYSDFALDPFFIPRKKRRLDIL</sequence>
<evidence type="ECO:0000255" key="1">
    <source>
        <dbReference type="HAMAP-Rule" id="MF_04003"/>
    </source>
</evidence>
<feature type="chain" id="PRO_0000133614" description="Minor capsid protein L2">
    <location>
        <begin position="1"/>
        <end position="502"/>
    </location>
</feature>
<feature type="short sequence motif" description="Nuclear localization signal" evidence="1">
    <location>
        <begin position="1"/>
        <end position="9"/>
    </location>
</feature>
<feature type="short sequence motif" description="Nuclear localization signal" evidence="1">
    <location>
        <begin position="493"/>
        <end position="501"/>
    </location>
</feature>
<feature type="disulfide bond" evidence="1">
    <location>
        <begin position="18"/>
        <end position="24"/>
    </location>
</feature>
<reference key="1">
    <citation type="submission" date="1995-10" db="EMBL/GenBank/DDBJ databases">
        <authorList>
            <person name="Delius H."/>
        </authorList>
    </citation>
    <scope>NUCLEOTIDE SEQUENCE [GENOMIC DNA]</scope>
</reference>
<proteinExistence type="inferred from homology"/>